<protein>
    <recommendedName>
        <fullName evidence="2">Cytochrome c biogenesis protein CcsA</fullName>
    </recommendedName>
</protein>
<organism>
    <name type="scientific">Prochlorococcus marinus (strain SARG / CCMP1375 / SS120)</name>
    <dbReference type="NCBI Taxonomy" id="167539"/>
    <lineage>
        <taxon>Bacteria</taxon>
        <taxon>Bacillati</taxon>
        <taxon>Cyanobacteriota</taxon>
        <taxon>Cyanophyceae</taxon>
        <taxon>Synechococcales</taxon>
        <taxon>Prochlorococcaceae</taxon>
        <taxon>Prochlorococcus</taxon>
    </lineage>
</organism>
<evidence type="ECO:0000250" key="1"/>
<evidence type="ECO:0000255" key="2">
    <source>
        <dbReference type="HAMAP-Rule" id="MF_01391"/>
    </source>
</evidence>
<gene>
    <name evidence="2" type="primary">ccsA</name>
    <name type="ordered locus">Pro_0838</name>
</gene>
<comment type="function">
    <text evidence="2">Required during biogenesis of c-type cytochromes (cytochrome c6 and cytochrome f) at the step of heme attachment.</text>
</comment>
<comment type="subunit">
    <text evidence="1">May interact with ccs1.</text>
</comment>
<comment type="subcellular location">
    <subcellularLocation>
        <location evidence="2">Cellular thylakoid membrane</location>
        <topology evidence="2">Multi-pass membrane protein</topology>
    </subcellularLocation>
</comment>
<comment type="similarity">
    <text evidence="2">Belongs to the CcmF/CycK/Ccl1/NrfE/CcsA family.</text>
</comment>
<keyword id="KW-0201">Cytochrome c-type biogenesis</keyword>
<keyword id="KW-0472">Membrane</keyword>
<keyword id="KW-1185">Reference proteome</keyword>
<keyword id="KW-0793">Thylakoid</keyword>
<keyword id="KW-0812">Transmembrane</keyword>
<keyword id="KW-1133">Transmembrane helix</keyword>
<name>CCSA_PROMA</name>
<proteinExistence type="inferred from homology"/>
<dbReference type="EMBL" id="AE017126">
    <property type="protein sequence ID" value="AAP99882.1"/>
    <property type="molecule type" value="Genomic_DNA"/>
</dbReference>
<dbReference type="RefSeq" id="NP_875230.1">
    <property type="nucleotide sequence ID" value="NC_005042.1"/>
</dbReference>
<dbReference type="SMR" id="Q7VCA3"/>
<dbReference type="STRING" id="167539.Pro_0838"/>
<dbReference type="TCDB" id="9.B.14.3.2">
    <property type="family name" value="the putative heme handling protein (hhp) family"/>
</dbReference>
<dbReference type="EnsemblBacteria" id="AAP99882">
    <property type="protein sequence ID" value="AAP99882"/>
    <property type="gene ID" value="Pro_0838"/>
</dbReference>
<dbReference type="KEGG" id="pma:Pro_0838"/>
<dbReference type="PATRIC" id="fig|167539.5.peg.886"/>
<dbReference type="eggNOG" id="COG0755">
    <property type="taxonomic scope" value="Bacteria"/>
</dbReference>
<dbReference type="HOGENOM" id="CLU_049710_2_4_3"/>
<dbReference type="OrthoDB" id="9814290at2"/>
<dbReference type="Proteomes" id="UP000001420">
    <property type="component" value="Chromosome"/>
</dbReference>
<dbReference type="GO" id="GO:0031676">
    <property type="term" value="C:plasma membrane-derived thylakoid membrane"/>
    <property type="evidence" value="ECO:0007669"/>
    <property type="project" value="UniProtKB-SubCell"/>
</dbReference>
<dbReference type="GO" id="GO:0020037">
    <property type="term" value="F:heme binding"/>
    <property type="evidence" value="ECO:0007669"/>
    <property type="project" value="InterPro"/>
</dbReference>
<dbReference type="GO" id="GO:0015232">
    <property type="term" value="F:heme transmembrane transporter activity"/>
    <property type="evidence" value="ECO:0007669"/>
    <property type="project" value="InterPro"/>
</dbReference>
<dbReference type="GO" id="GO:0017004">
    <property type="term" value="P:cytochrome complex assembly"/>
    <property type="evidence" value="ECO:0007669"/>
    <property type="project" value="UniProtKB-UniRule"/>
</dbReference>
<dbReference type="HAMAP" id="MF_01391">
    <property type="entry name" value="CytC_CcsA"/>
    <property type="match status" value="1"/>
</dbReference>
<dbReference type="InterPro" id="IPR002541">
    <property type="entry name" value="Cyt_c_assembly"/>
</dbReference>
<dbReference type="InterPro" id="IPR003557">
    <property type="entry name" value="Cyt_c_biogenesis_CcmC"/>
</dbReference>
<dbReference type="InterPro" id="IPR017562">
    <property type="entry name" value="Cyt_c_biogenesis_CcsA"/>
</dbReference>
<dbReference type="InterPro" id="IPR045062">
    <property type="entry name" value="Cyt_c_biogenesis_CcsA/CcmC"/>
</dbReference>
<dbReference type="NCBIfam" id="TIGR03144">
    <property type="entry name" value="cytochr_II_ccsB"/>
    <property type="match status" value="1"/>
</dbReference>
<dbReference type="PANTHER" id="PTHR30071:SF1">
    <property type="entry name" value="CYTOCHROME B_B6 PROTEIN-RELATED"/>
    <property type="match status" value="1"/>
</dbReference>
<dbReference type="PANTHER" id="PTHR30071">
    <property type="entry name" value="HEME EXPORTER PROTEIN C"/>
    <property type="match status" value="1"/>
</dbReference>
<dbReference type="Pfam" id="PF01578">
    <property type="entry name" value="Cytochrom_C_asm"/>
    <property type="match status" value="1"/>
</dbReference>
<dbReference type="PRINTS" id="PR01386">
    <property type="entry name" value="CCMCBIOGNSIS"/>
</dbReference>
<reference key="1">
    <citation type="journal article" date="2003" name="Proc. Natl. Acad. Sci. U.S.A.">
        <title>Genome sequence of the cyanobacterium Prochlorococcus marinus SS120, a nearly minimal oxyphototrophic genome.</title>
        <authorList>
            <person name="Dufresne A."/>
            <person name="Salanoubat M."/>
            <person name="Partensky F."/>
            <person name="Artiguenave F."/>
            <person name="Axmann I.M."/>
            <person name="Barbe V."/>
            <person name="Duprat S."/>
            <person name="Galperin M.Y."/>
            <person name="Koonin E.V."/>
            <person name="Le Gall F."/>
            <person name="Makarova K.S."/>
            <person name="Ostrowski M."/>
            <person name="Oztas S."/>
            <person name="Robert C."/>
            <person name="Rogozin I.B."/>
            <person name="Scanlan D.J."/>
            <person name="Tandeau de Marsac N."/>
            <person name="Weissenbach J."/>
            <person name="Wincker P."/>
            <person name="Wolf Y.I."/>
            <person name="Hess W.R."/>
        </authorList>
    </citation>
    <scope>NUCLEOTIDE SEQUENCE [LARGE SCALE GENOMIC DNA]</scope>
    <source>
        <strain>SARG / CCMP1375 / SS120</strain>
    </source>
</reference>
<sequence length="316" mass="35350">MNLILMINLFLYINGLDPVLTLGSLAFVLILISLPFSFWNVGENSNSSIVRILIASANILLAIQLVFRWIQSGHFPISNLYESLCFLTWGLTFIQLLIERTFPYPLIQAALTPISLLSIAFASFVLPDELKASSSLVPALKSNWLVMHVSVIMCSYAALLIGSLLSLVVLLSSSRETLQIRSNSMGIGGFKNKSENLNIVKSIDELIPITFSKSEELDNLSYRTITFGFLLLTFGLISGAVWANEAWGSWWSWDPKETWAFISWLIYAAYLHTRLSRGWQGKRPAIIAIIGLFIILICYIGVNFLGIGLHSYGWFL</sequence>
<feature type="chain" id="PRO_0000353703" description="Cytochrome c biogenesis protein CcsA">
    <location>
        <begin position="1"/>
        <end position="316"/>
    </location>
</feature>
<feature type="transmembrane region" description="Helical" evidence="2">
    <location>
        <begin position="19"/>
        <end position="39"/>
    </location>
</feature>
<feature type="transmembrane region" description="Helical" evidence="2">
    <location>
        <begin position="47"/>
        <end position="67"/>
    </location>
</feature>
<feature type="transmembrane region" description="Helical" evidence="2">
    <location>
        <begin position="77"/>
        <end position="97"/>
    </location>
</feature>
<feature type="transmembrane region" description="Helical" evidence="2">
    <location>
        <begin position="106"/>
        <end position="126"/>
    </location>
</feature>
<feature type="transmembrane region" description="Helical" evidence="2">
    <location>
        <begin position="151"/>
        <end position="171"/>
    </location>
</feature>
<feature type="transmembrane region" description="Helical" evidence="2">
    <location>
        <begin position="224"/>
        <end position="244"/>
    </location>
</feature>
<feature type="transmembrane region" description="Helical" evidence="2">
    <location>
        <begin position="258"/>
        <end position="275"/>
    </location>
</feature>
<feature type="transmembrane region" description="Helical" evidence="2">
    <location>
        <begin position="285"/>
        <end position="305"/>
    </location>
</feature>
<accession>Q7VCA3</accession>